<protein>
    <recommendedName>
        <fullName>Uncharacterized protein F26A3.7</fullName>
    </recommendedName>
</protein>
<keyword id="KW-1185">Reference proteome</keyword>
<dbReference type="EMBL" id="Z78419">
    <property type="protein sequence ID" value="CAB01706.1"/>
    <property type="molecule type" value="Genomic_DNA"/>
</dbReference>
<dbReference type="EMBL" id="Z84712">
    <property type="protein sequence ID" value="CAB01706.1"/>
    <property type="status" value="JOINED"/>
    <property type="molecule type" value="Genomic_DNA"/>
</dbReference>
<dbReference type="PIR" id="T21387">
    <property type="entry name" value="T21387"/>
</dbReference>
<dbReference type="RefSeq" id="NP_492136.1">
    <property type="nucleotide sequence ID" value="NM_059735.7"/>
</dbReference>
<dbReference type="BioGRID" id="37968">
    <property type="interactions" value="2"/>
</dbReference>
<dbReference type="FunCoup" id="Q93591">
    <property type="interactions" value="2883"/>
</dbReference>
<dbReference type="STRING" id="6239.F26A3.7.1"/>
<dbReference type="PaxDb" id="6239-F26A3.7"/>
<dbReference type="PeptideAtlas" id="Q93591"/>
<dbReference type="EnsemblMetazoa" id="F26A3.7.1">
    <property type="protein sequence ID" value="F26A3.7.1"/>
    <property type="gene ID" value="WBGene00009145"/>
</dbReference>
<dbReference type="EnsemblMetazoa" id="F26A3.7.2">
    <property type="protein sequence ID" value="F26A3.7.2"/>
    <property type="gene ID" value="WBGene00009145"/>
</dbReference>
<dbReference type="GeneID" id="172526"/>
<dbReference type="KEGG" id="cel:CELE_F26A3.7"/>
<dbReference type="UCSC" id="F26A3.7">
    <property type="organism name" value="c. elegans"/>
</dbReference>
<dbReference type="AGR" id="WB:WBGene00009145"/>
<dbReference type="CTD" id="172526"/>
<dbReference type="WormBase" id="F26A3.7">
    <property type="protein sequence ID" value="CE09672"/>
    <property type="gene ID" value="WBGene00009145"/>
</dbReference>
<dbReference type="eggNOG" id="KOG4188">
    <property type="taxonomic scope" value="Eukaryota"/>
</dbReference>
<dbReference type="HOGENOM" id="CLU_1062595_0_0_1"/>
<dbReference type="InParanoid" id="Q93591"/>
<dbReference type="OMA" id="WMTSVPK"/>
<dbReference type="OrthoDB" id="73491at2759"/>
<dbReference type="PhylomeDB" id="Q93591"/>
<dbReference type="PRO" id="PR:Q93591"/>
<dbReference type="Proteomes" id="UP000001940">
    <property type="component" value="Chromosome I"/>
</dbReference>
<dbReference type="Bgee" id="WBGene00009145">
    <property type="expression patterns" value="Expressed in germ line (C elegans) and 4 other cell types or tissues"/>
</dbReference>
<dbReference type="InterPro" id="IPR022226">
    <property type="entry name" value="DUF3752"/>
</dbReference>
<dbReference type="InterPro" id="IPR046331">
    <property type="entry name" value="GPAM1-like"/>
</dbReference>
<dbReference type="PANTHER" id="PTHR46370">
    <property type="entry name" value="GPALPP MOTIFS-CONTAINING PROTEIN 1"/>
    <property type="match status" value="1"/>
</dbReference>
<dbReference type="PANTHER" id="PTHR46370:SF1">
    <property type="entry name" value="GPALPP MOTIFS-CONTAINING PROTEIN 1"/>
    <property type="match status" value="1"/>
</dbReference>
<dbReference type="Pfam" id="PF12572">
    <property type="entry name" value="DUF3752"/>
    <property type="match status" value="1"/>
</dbReference>
<sequence>MSYGPQLPAFLMKGQIKENEVDDEAEEGAPQVYGPVIPGMEEPKNEKEKHDDQEETSVFGPSIPKEVREKLQNVENPAEDDEEDEEFPSQSYGPSIPSNFRPTVGPSIPGTFGDDSDEDIGPMPVAKGDEEKEAIDRAYRMVLQKEAEDDEKNFQPKREEWMTSVPKKLGNFGLGARTFKKGTTSERDASWEDAPGAKKRRNEETRSARSVGIAAADARQAAIVAEKTSGPSLLEIHQKKRDEKVKDAGYAQGERRPFDREKDMEVRGLKPGGSKEAVDRMKEFADRFANSKDQRFL</sequence>
<feature type="chain" id="PRO_0000065316" description="Uncharacterized protein F26A3.7">
    <location>
        <begin position="1"/>
        <end position="297"/>
    </location>
</feature>
<feature type="region of interest" description="Disordered" evidence="1">
    <location>
        <begin position="19"/>
        <end position="133"/>
    </location>
</feature>
<feature type="region of interest" description="Disordered" evidence="1">
    <location>
        <begin position="147"/>
        <end position="214"/>
    </location>
</feature>
<feature type="region of interest" description="Disordered" evidence="1">
    <location>
        <begin position="226"/>
        <end position="277"/>
    </location>
</feature>
<feature type="compositionally biased region" description="Basic and acidic residues" evidence="1">
    <location>
        <begin position="41"/>
        <end position="52"/>
    </location>
</feature>
<feature type="compositionally biased region" description="Acidic residues" evidence="1">
    <location>
        <begin position="77"/>
        <end position="87"/>
    </location>
</feature>
<feature type="compositionally biased region" description="Polar residues" evidence="1">
    <location>
        <begin position="88"/>
        <end position="101"/>
    </location>
</feature>
<feature type="compositionally biased region" description="Basic and acidic residues" evidence="1">
    <location>
        <begin position="147"/>
        <end position="161"/>
    </location>
</feature>
<feature type="compositionally biased region" description="Basic and acidic residues" evidence="1">
    <location>
        <begin position="236"/>
        <end position="268"/>
    </location>
</feature>
<reference key="1">
    <citation type="journal article" date="1998" name="Science">
        <title>Genome sequence of the nematode C. elegans: a platform for investigating biology.</title>
        <authorList>
            <consortium name="The C. elegans sequencing consortium"/>
        </authorList>
    </citation>
    <scope>NUCLEOTIDE SEQUENCE [LARGE SCALE GENOMIC DNA]</scope>
    <source>
        <strain>Bristol N2</strain>
    </source>
</reference>
<proteinExistence type="predicted"/>
<organism>
    <name type="scientific">Caenorhabditis elegans</name>
    <dbReference type="NCBI Taxonomy" id="6239"/>
    <lineage>
        <taxon>Eukaryota</taxon>
        <taxon>Metazoa</taxon>
        <taxon>Ecdysozoa</taxon>
        <taxon>Nematoda</taxon>
        <taxon>Chromadorea</taxon>
        <taxon>Rhabditida</taxon>
        <taxon>Rhabditina</taxon>
        <taxon>Rhabditomorpha</taxon>
        <taxon>Rhabditoidea</taxon>
        <taxon>Rhabditidae</taxon>
        <taxon>Peloderinae</taxon>
        <taxon>Caenorhabditis</taxon>
    </lineage>
</organism>
<evidence type="ECO:0000256" key="1">
    <source>
        <dbReference type="SAM" id="MobiDB-lite"/>
    </source>
</evidence>
<name>YUBO_CAEEL</name>
<gene>
    <name type="ORF">F26A3.7</name>
</gene>
<accession>Q93591</accession>
<accession>P91830</accession>